<name>PPTA_ECOHS</name>
<organism>
    <name type="scientific">Escherichia coli O9:H4 (strain HS)</name>
    <dbReference type="NCBI Taxonomy" id="331112"/>
    <lineage>
        <taxon>Bacteria</taxon>
        <taxon>Pseudomonadati</taxon>
        <taxon>Pseudomonadota</taxon>
        <taxon>Gammaproteobacteria</taxon>
        <taxon>Enterobacterales</taxon>
        <taxon>Enterobacteriaceae</taxon>
        <taxon>Escherichia</taxon>
    </lineage>
</organism>
<sequence length="75" mass="8488">MPHIDIKCFPRELDEQQKAALAADITDVIIRHLNSKDSSISIALQQIQPESWQAIWDAEIAPQMEALIKKPGYSM</sequence>
<proteinExistence type="inferred from homology"/>
<comment type="subunit">
    <text evidence="1">Homodimer.</text>
</comment>
<comment type="subcellular location">
    <subcellularLocation>
        <location evidence="1">Cytoplasm</location>
    </subcellularLocation>
</comment>
<comment type="similarity">
    <text evidence="1">Belongs to the 4-oxalocrotonate tautomerase family. PptA subfamily.</text>
</comment>
<feature type="initiator methionine" description="Removed" evidence="1">
    <location>
        <position position="1"/>
    </location>
</feature>
<feature type="chain" id="PRO_0000348344" description="Tautomerase PptA">
    <location>
        <begin position="2"/>
        <end position="75"/>
    </location>
</feature>
<feature type="active site" description="Proton acceptor; via imino nitrogen" evidence="1">
    <location>
        <position position="2"/>
    </location>
</feature>
<protein>
    <recommendedName>
        <fullName evidence="1">Tautomerase PptA</fullName>
        <ecNumber evidence="1">5.3.2.-</ecNumber>
    </recommendedName>
</protein>
<keyword id="KW-0963">Cytoplasm</keyword>
<keyword id="KW-0413">Isomerase</keyword>
<gene>
    <name evidence="1" type="primary">pptA</name>
    <name type="ordered locus">EcHS_A1545</name>
</gene>
<evidence type="ECO:0000255" key="1">
    <source>
        <dbReference type="HAMAP-Rule" id="MF_00718"/>
    </source>
</evidence>
<reference key="1">
    <citation type="journal article" date="2008" name="J. Bacteriol.">
        <title>The pangenome structure of Escherichia coli: comparative genomic analysis of E. coli commensal and pathogenic isolates.</title>
        <authorList>
            <person name="Rasko D.A."/>
            <person name="Rosovitz M.J."/>
            <person name="Myers G.S.A."/>
            <person name="Mongodin E.F."/>
            <person name="Fricke W.F."/>
            <person name="Gajer P."/>
            <person name="Crabtree J."/>
            <person name="Sebaihia M."/>
            <person name="Thomson N.R."/>
            <person name="Chaudhuri R."/>
            <person name="Henderson I.R."/>
            <person name="Sperandio V."/>
            <person name="Ravel J."/>
        </authorList>
    </citation>
    <scope>NUCLEOTIDE SEQUENCE [LARGE SCALE GENOMIC DNA]</scope>
    <source>
        <strain>HS</strain>
    </source>
</reference>
<dbReference type="EC" id="5.3.2.-" evidence="1"/>
<dbReference type="EMBL" id="CP000802">
    <property type="protein sequence ID" value="ABV05872.1"/>
    <property type="molecule type" value="Genomic_DNA"/>
</dbReference>
<dbReference type="RefSeq" id="WP_001120141.1">
    <property type="nucleotide sequence ID" value="NC_009800.1"/>
</dbReference>
<dbReference type="SMR" id="A8A018"/>
<dbReference type="GeneID" id="75203165"/>
<dbReference type="KEGG" id="ecx:EcHS_A1545"/>
<dbReference type="HOGENOM" id="CLU_183611_0_1_6"/>
<dbReference type="GO" id="GO:0005737">
    <property type="term" value="C:cytoplasm"/>
    <property type="evidence" value="ECO:0007669"/>
    <property type="project" value="UniProtKB-SubCell"/>
</dbReference>
<dbReference type="GO" id="GO:0016862">
    <property type="term" value="F:intramolecular oxidoreductase activity, interconverting keto- and enol-groups"/>
    <property type="evidence" value="ECO:0007669"/>
    <property type="project" value="UniProtKB-UniRule"/>
</dbReference>
<dbReference type="Gene3D" id="3.30.429.10">
    <property type="entry name" value="Macrophage Migration Inhibitory Factor"/>
    <property type="match status" value="1"/>
</dbReference>
<dbReference type="HAMAP" id="MF_00718">
    <property type="entry name" value="Tautomerase_PptA"/>
    <property type="match status" value="1"/>
</dbReference>
<dbReference type="InterPro" id="IPR004370">
    <property type="entry name" value="4-OT-like_dom"/>
</dbReference>
<dbReference type="InterPro" id="IPR014347">
    <property type="entry name" value="Tautomerase/MIF_sf"/>
</dbReference>
<dbReference type="InterPro" id="IPR017284">
    <property type="entry name" value="Tautomerase_PptA"/>
</dbReference>
<dbReference type="NCBIfam" id="NF002324">
    <property type="entry name" value="PRK01271.1"/>
    <property type="match status" value="1"/>
</dbReference>
<dbReference type="Pfam" id="PF01361">
    <property type="entry name" value="Tautomerase"/>
    <property type="match status" value="1"/>
</dbReference>
<dbReference type="PIRSF" id="PIRSF037799">
    <property type="entry name" value="Tautomer_YdcE_prd"/>
    <property type="match status" value="1"/>
</dbReference>
<dbReference type="SUPFAM" id="SSF55331">
    <property type="entry name" value="Tautomerase/MIF"/>
    <property type="match status" value="1"/>
</dbReference>
<accession>A8A018</accession>